<gene>
    <name type="primary">Ubqlnl</name>
</gene>
<name>UBQLN_MOUSE</name>
<evidence type="ECO:0000255" key="1">
    <source>
        <dbReference type="PROSITE-ProRule" id="PRU00214"/>
    </source>
</evidence>
<evidence type="ECO:0000305" key="2"/>
<evidence type="ECO:0007829" key="3">
    <source>
        <dbReference type="PDB" id="2DNA"/>
    </source>
</evidence>
<protein>
    <recommendedName>
        <fullName>Ubiquilin-like protein</fullName>
    </recommendedName>
</protein>
<dbReference type="EMBL" id="AK076645">
    <property type="protein sequence ID" value="BAC36434.1"/>
    <property type="molecule type" value="mRNA"/>
</dbReference>
<dbReference type="EMBL" id="AC123830">
    <property type="status" value="NOT_ANNOTATED_CDS"/>
    <property type="molecule type" value="Genomic_DNA"/>
</dbReference>
<dbReference type="EMBL" id="BC111901">
    <property type="protein sequence ID" value="AAI11902.1"/>
    <property type="molecule type" value="mRNA"/>
</dbReference>
<dbReference type="EMBL" id="BC113134">
    <property type="protein sequence ID" value="AAI13135.1"/>
    <property type="molecule type" value="mRNA"/>
</dbReference>
<dbReference type="CCDS" id="CCDS21611.1"/>
<dbReference type="RefSeq" id="NP_941026.2">
    <property type="nucleotide sequence ID" value="NM_198624.3"/>
</dbReference>
<dbReference type="PDB" id="2DNA">
    <property type="method" value="NMR"/>
    <property type="chains" value="A=557-610"/>
</dbReference>
<dbReference type="PDBsum" id="2DNA"/>
<dbReference type="SMR" id="Q14DL0"/>
<dbReference type="FunCoup" id="Q14DL0">
    <property type="interactions" value="224"/>
</dbReference>
<dbReference type="STRING" id="10090.ENSMUSP00000056365"/>
<dbReference type="iPTMnet" id="Q14DL0"/>
<dbReference type="PhosphoSitePlus" id="Q14DL0"/>
<dbReference type="PaxDb" id="10090-ENSMUSP00000056365"/>
<dbReference type="ProteomicsDB" id="297796"/>
<dbReference type="Antibodypedia" id="23640">
    <property type="antibodies" value="70 antibodies from 20 providers"/>
</dbReference>
<dbReference type="DNASU" id="244179"/>
<dbReference type="Ensembl" id="ENSMUST00000059121.5">
    <property type="protein sequence ID" value="ENSMUSP00000056365.5"/>
    <property type="gene ID" value="ENSMUSG00000051437.5"/>
</dbReference>
<dbReference type="GeneID" id="244179"/>
<dbReference type="KEGG" id="mmu:244179"/>
<dbReference type="UCSC" id="uc009ivl.1">
    <property type="organism name" value="mouse"/>
</dbReference>
<dbReference type="AGR" id="MGI:2685336"/>
<dbReference type="CTD" id="143630"/>
<dbReference type="MGI" id="MGI:2685336">
    <property type="gene designation" value="Ubqlnl"/>
</dbReference>
<dbReference type="VEuPathDB" id="HostDB:ENSMUSG00000051437"/>
<dbReference type="eggNOG" id="KOG0010">
    <property type="taxonomic scope" value="Eukaryota"/>
</dbReference>
<dbReference type="GeneTree" id="ENSGT00940000163345"/>
<dbReference type="HOGENOM" id="CLU_024293_4_0_1"/>
<dbReference type="InParanoid" id="Q14DL0"/>
<dbReference type="OMA" id="LSAHFKC"/>
<dbReference type="OrthoDB" id="267397at2759"/>
<dbReference type="PhylomeDB" id="Q14DL0"/>
<dbReference type="TreeFam" id="TF314412"/>
<dbReference type="BioGRID-ORCS" id="244179">
    <property type="hits" value="2 hits in 78 CRISPR screens"/>
</dbReference>
<dbReference type="EvolutionaryTrace" id="Q14DL0"/>
<dbReference type="PRO" id="PR:Q14DL0"/>
<dbReference type="Proteomes" id="UP000000589">
    <property type="component" value="Chromosome 7"/>
</dbReference>
<dbReference type="RNAct" id="Q14DL0">
    <property type="molecule type" value="protein"/>
</dbReference>
<dbReference type="Bgee" id="ENSMUSG00000051437">
    <property type="expression patterns" value="Expressed in seminiferous tubule of testis and 3 other cell types or tissues"/>
</dbReference>
<dbReference type="CDD" id="cd14399">
    <property type="entry name" value="UBA_PLICs"/>
    <property type="match status" value="1"/>
</dbReference>
<dbReference type="FunFam" id="3.10.20.90:FF:000095">
    <property type="entry name" value="Ubiquilin 4"/>
    <property type="match status" value="1"/>
</dbReference>
<dbReference type="FunFam" id="1.10.8.10:FF:000077">
    <property type="entry name" value="Ubiquilin like"/>
    <property type="match status" value="1"/>
</dbReference>
<dbReference type="Gene3D" id="1.10.8.10">
    <property type="entry name" value="DNA helicase RuvA subunit, C-terminal domain"/>
    <property type="match status" value="1"/>
</dbReference>
<dbReference type="Gene3D" id="3.10.20.90">
    <property type="entry name" value="Phosphatidylinositol 3-kinase Catalytic Subunit, Chain A, domain 1"/>
    <property type="match status" value="1"/>
</dbReference>
<dbReference type="InterPro" id="IPR009060">
    <property type="entry name" value="UBA-like_sf"/>
</dbReference>
<dbReference type="InterPro" id="IPR015496">
    <property type="entry name" value="Ubiquilin"/>
</dbReference>
<dbReference type="InterPro" id="IPR000626">
    <property type="entry name" value="Ubiquitin-like_dom"/>
</dbReference>
<dbReference type="InterPro" id="IPR029071">
    <property type="entry name" value="Ubiquitin-like_domsf"/>
</dbReference>
<dbReference type="PANTHER" id="PTHR10677">
    <property type="entry name" value="UBIQUILIN"/>
    <property type="match status" value="1"/>
</dbReference>
<dbReference type="PANTHER" id="PTHR10677:SF9">
    <property type="entry name" value="UBIQUILIN-LIKE PROTEIN"/>
    <property type="match status" value="1"/>
</dbReference>
<dbReference type="Pfam" id="PF00240">
    <property type="entry name" value="ubiquitin"/>
    <property type="match status" value="1"/>
</dbReference>
<dbReference type="Pfam" id="PF23195">
    <property type="entry name" value="UBQLN1"/>
    <property type="match status" value="1"/>
</dbReference>
<dbReference type="SMART" id="SM00213">
    <property type="entry name" value="UBQ"/>
    <property type="match status" value="1"/>
</dbReference>
<dbReference type="SUPFAM" id="SSF46934">
    <property type="entry name" value="UBA-like"/>
    <property type="match status" value="1"/>
</dbReference>
<dbReference type="SUPFAM" id="SSF54236">
    <property type="entry name" value="Ubiquitin-like"/>
    <property type="match status" value="1"/>
</dbReference>
<dbReference type="PROSITE" id="PS50053">
    <property type="entry name" value="UBIQUITIN_2"/>
    <property type="match status" value="1"/>
</dbReference>
<proteinExistence type="evidence at protein level"/>
<sequence>MPRIISRSPKMPQSRYTAGVPADGKISPGVIRVIVKTPGNQIIFTVADDTLVRQFKEILSAHFKCQMEQLVLVFMGRLLKDHDTLSQRGITDGHIIHVVIKSKHGPRSLAHSFRNLVTNNPCHQDRNPKGNSSMVCQSAGMNETKVESSLLMEPEAPKVGTESPEVGSLEHIAQVLENLCVQSLLSNMDFVHQMPPEQPYMEELIQQNPEVSHLLDNSEILCQTLELVRHLAIIQEIMQIQQPAQNPEYPPNSQPFLGLETVPNGNNHLGQSYVNNNDHMLNGVPDLLEGNCFTALLDEQVLEQVQTPSLSQPLPQEQWDQLSSSQVIYANSCGLSSITPTNATPNHTNNVSRENPAIVATQGQSNVCAVQQPAEIPVLPTISINQKPQVDKDTTITLGISDQWLEEDLQQSDDQTSSQITGGMIQLLRNHPQMAAQMLLLMNTSQLNEQWRQETPTPLQSSQLHDLLLALANPKTSQALLQIEHGLQLLATEAPALLPYIEPYLWGLGWLIPSICSYPDIVPWTWNVQDMAEPQCPESCHKSETVLQKVQPPSGDPSHSLQAPEVRFSKEMECLQAMGFVNYNANLQALIATDGDTNAAIYKLKSSQGF</sequence>
<accession>Q14DL0</accession>
<accession>E9QM12</accession>
<accession>Q14DR8</accession>
<accession>Q8BVT0</accession>
<feature type="chain" id="PRO_0000307792" description="Ubiquilin-like protein">
    <location>
        <begin position="1"/>
        <end position="610"/>
    </location>
</feature>
<feature type="domain" description="Ubiquitin-like" evidence="1">
    <location>
        <begin position="31"/>
        <end position="105"/>
    </location>
</feature>
<feature type="domain" description="UBA">
    <location>
        <begin position="562"/>
        <end position="607"/>
    </location>
</feature>
<feature type="sequence conflict" description="In Ref. 3; AAI11902." evidence="2" ref="3">
    <original>T</original>
    <variation>P</variation>
    <location>
        <position position="17"/>
    </location>
</feature>
<feature type="sequence conflict" description="In Ref. 1; BAC36434." evidence="2" ref="1">
    <original>V</original>
    <variation>G</variation>
    <location>
        <position position="52"/>
    </location>
</feature>
<feature type="sequence conflict" description="In Ref. 3; AAI11902." evidence="2" ref="3">
    <original>I</original>
    <variation>M</variation>
    <location>
        <position position="58"/>
    </location>
</feature>
<feature type="sequence conflict" description="In Ref. 3; AAI11902." evidence="2" ref="3">
    <original>H</original>
    <variation>Y</variation>
    <location>
        <position position="82"/>
    </location>
</feature>
<feature type="sequence conflict" description="In Ref. 3; AAI11902." evidence="2" ref="3">
    <original>S</original>
    <variation>C</variation>
    <location>
        <position position="132"/>
    </location>
</feature>
<feature type="sequence conflict" description="In Ref. 3; AAI11902." evidence="2" ref="3">
    <original>N</original>
    <variation>S</variation>
    <location>
        <position position="142"/>
    </location>
</feature>
<feature type="sequence conflict" description="In Ref. 3; AAI11902." evidence="2" ref="3">
    <original>K</original>
    <variation>I</variation>
    <location>
        <position position="145"/>
    </location>
</feature>
<feature type="sequence conflict" description="In Ref. 3; AAI11902." evidence="2" ref="3">
    <location>
        <position position="150"/>
    </location>
</feature>
<feature type="sequence conflict" description="In Ref. 3; AAI11902." evidence="2" ref="3">
    <original>S</original>
    <variation>G</variation>
    <location>
        <position position="163"/>
    </location>
</feature>
<feature type="sequence conflict" description="In Ref. 3; AAI11902." evidence="2" ref="3">
    <original>P</original>
    <variation>Q</variation>
    <location>
        <position position="196"/>
    </location>
</feature>
<feature type="sequence conflict" description="In Ref. 3; AAI11902." evidence="2" ref="3">
    <original>F</original>
    <variation>Y</variation>
    <location>
        <position position="256"/>
    </location>
</feature>
<feature type="sequence conflict" description="In Ref. 3; AAI11902." evidence="2" ref="3">
    <original>V</original>
    <variation>A</variation>
    <location>
        <position position="284"/>
    </location>
</feature>
<feature type="sequence conflict" description="In Ref. 3; AAI11902." evidence="2" ref="3">
    <original>P</original>
    <variation>S</variation>
    <location>
        <position position="345"/>
    </location>
</feature>
<feature type="sequence conflict" description="In Ref. 3; AAI11902." evidence="2" ref="3">
    <original>S</original>
    <variation>P</variation>
    <location>
        <position position="383"/>
    </location>
</feature>
<feature type="sequence conflict" description="In Ref. 3; AAI11902." evidence="2" ref="3">
    <original>K</original>
    <variation>E</variation>
    <location>
        <position position="387"/>
    </location>
</feature>
<feature type="sequence conflict" description="In Ref. 3; AAI11902." evidence="2" ref="3">
    <original>T</original>
    <variation>A</variation>
    <location>
        <position position="395"/>
    </location>
</feature>
<feature type="sequence conflict" description="In Ref. 3; AAI13135." evidence="2" ref="3">
    <original>G</original>
    <variation>R</variation>
    <location>
        <position position="423"/>
    </location>
</feature>
<feature type="sequence conflict" description="In Ref. 3; AAI11902/AAI13135." evidence="2" ref="3">
    <original>S</original>
    <variation>P</variation>
    <location>
        <position position="445"/>
    </location>
</feature>
<feature type="sequence conflict" description="In Ref. 3; AAI11902." evidence="2" ref="3">
    <original>Q</original>
    <variation>H</variation>
    <location>
        <position position="460"/>
    </location>
</feature>
<feature type="sequence conflict" description="In Ref. 3; AAI11902." evidence="2" ref="3">
    <original>S</original>
    <variation>G</variation>
    <location>
        <position position="517"/>
    </location>
</feature>
<feature type="sequence conflict" description="In Ref. 1; BAC36434." evidence="2" ref="1">
    <original>V</original>
    <variation>E</variation>
    <location>
        <position position="522"/>
    </location>
</feature>
<feature type="sequence conflict" description="In Ref. 3; AAI11902." evidence="2" ref="3">
    <original>P</original>
    <variation>L</variation>
    <location>
        <position position="553"/>
    </location>
</feature>
<feature type="helix" evidence="3">
    <location>
        <begin position="564"/>
        <end position="567"/>
    </location>
</feature>
<feature type="helix" evidence="3">
    <location>
        <begin position="569"/>
        <end position="578"/>
    </location>
</feature>
<feature type="helix" evidence="3">
    <location>
        <begin position="583"/>
        <end position="592"/>
    </location>
</feature>
<feature type="helix" evidence="3">
    <location>
        <begin position="597"/>
        <end position="606"/>
    </location>
</feature>
<keyword id="KW-0002">3D-structure</keyword>
<keyword id="KW-1185">Reference proteome</keyword>
<organism>
    <name type="scientific">Mus musculus</name>
    <name type="common">Mouse</name>
    <dbReference type="NCBI Taxonomy" id="10090"/>
    <lineage>
        <taxon>Eukaryota</taxon>
        <taxon>Metazoa</taxon>
        <taxon>Chordata</taxon>
        <taxon>Craniata</taxon>
        <taxon>Vertebrata</taxon>
        <taxon>Euteleostomi</taxon>
        <taxon>Mammalia</taxon>
        <taxon>Eutheria</taxon>
        <taxon>Euarchontoglires</taxon>
        <taxon>Glires</taxon>
        <taxon>Rodentia</taxon>
        <taxon>Myomorpha</taxon>
        <taxon>Muroidea</taxon>
        <taxon>Muridae</taxon>
        <taxon>Murinae</taxon>
        <taxon>Mus</taxon>
        <taxon>Mus</taxon>
    </lineage>
</organism>
<reference key="1">
    <citation type="journal article" date="2005" name="Science">
        <title>The transcriptional landscape of the mammalian genome.</title>
        <authorList>
            <person name="Carninci P."/>
            <person name="Kasukawa T."/>
            <person name="Katayama S."/>
            <person name="Gough J."/>
            <person name="Frith M.C."/>
            <person name="Maeda N."/>
            <person name="Oyama R."/>
            <person name="Ravasi T."/>
            <person name="Lenhard B."/>
            <person name="Wells C."/>
            <person name="Kodzius R."/>
            <person name="Shimokawa K."/>
            <person name="Bajic V.B."/>
            <person name="Brenner S.E."/>
            <person name="Batalov S."/>
            <person name="Forrest A.R."/>
            <person name="Zavolan M."/>
            <person name="Davis M.J."/>
            <person name="Wilming L.G."/>
            <person name="Aidinis V."/>
            <person name="Allen J.E."/>
            <person name="Ambesi-Impiombato A."/>
            <person name="Apweiler R."/>
            <person name="Aturaliya R.N."/>
            <person name="Bailey T.L."/>
            <person name="Bansal M."/>
            <person name="Baxter L."/>
            <person name="Beisel K.W."/>
            <person name="Bersano T."/>
            <person name="Bono H."/>
            <person name="Chalk A.M."/>
            <person name="Chiu K.P."/>
            <person name="Choudhary V."/>
            <person name="Christoffels A."/>
            <person name="Clutterbuck D.R."/>
            <person name="Crowe M.L."/>
            <person name="Dalla E."/>
            <person name="Dalrymple B.P."/>
            <person name="de Bono B."/>
            <person name="Della Gatta G."/>
            <person name="di Bernardo D."/>
            <person name="Down T."/>
            <person name="Engstrom P."/>
            <person name="Fagiolini M."/>
            <person name="Faulkner G."/>
            <person name="Fletcher C.F."/>
            <person name="Fukushima T."/>
            <person name="Furuno M."/>
            <person name="Futaki S."/>
            <person name="Gariboldi M."/>
            <person name="Georgii-Hemming P."/>
            <person name="Gingeras T.R."/>
            <person name="Gojobori T."/>
            <person name="Green R.E."/>
            <person name="Gustincich S."/>
            <person name="Harbers M."/>
            <person name="Hayashi Y."/>
            <person name="Hensch T.K."/>
            <person name="Hirokawa N."/>
            <person name="Hill D."/>
            <person name="Huminiecki L."/>
            <person name="Iacono M."/>
            <person name="Ikeo K."/>
            <person name="Iwama A."/>
            <person name="Ishikawa T."/>
            <person name="Jakt M."/>
            <person name="Kanapin A."/>
            <person name="Katoh M."/>
            <person name="Kawasawa Y."/>
            <person name="Kelso J."/>
            <person name="Kitamura H."/>
            <person name="Kitano H."/>
            <person name="Kollias G."/>
            <person name="Krishnan S.P."/>
            <person name="Kruger A."/>
            <person name="Kummerfeld S.K."/>
            <person name="Kurochkin I.V."/>
            <person name="Lareau L.F."/>
            <person name="Lazarevic D."/>
            <person name="Lipovich L."/>
            <person name="Liu J."/>
            <person name="Liuni S."/>
            <person name="McWilliam S."/>
            <person name="Madan Babu M."/>
            <person name="Madera M."/>
            <person name="Marchionni L."/>
            <person name="Matsuda H."/>
            <person name="Matsuzawa S."/>
            <person name="Miki H."/>
            <person name="Mignone F."/>
            <person name="Miyake S."/>
            <person name="Morris K."/>
            <person name="Mottagui-Tabar S."/>
            <person name="Mulder N."/>
            <person name="Nakano N."/>
            <person name="Nakauchi H."/>
            <person name="Ng P."/>
            <person name="Nilsson R."/>
            <person name="Nishiguchi S."/>
            <person name="Nishikawa S."/>
            <person name="Nori F."/>
            <person name="Ohara O."/>
            <person name="Okazaki Y."/>
            <person name="Orlando V."/>
            <person name="Pang K.C."/>
            <person name="Pavan W.J."/>
            <person name="Pavesi G."/>
            <person name="Pesole G."/>
            <person name="Petrovsky N."/>
            <person name="Piazza S."/>
            <person name="Reed J."/>
            <person name="Reid J.F."/>
            <person name="Ring B.Z."/>
            <person name="Ringwald M."/>
            <person name="Rost B."/>
            <person name="Ruan Y."/>
            <person name="Salzberg S.L."/>
            <person name="Sandelin A."/>
            <person name="Schneider C."/>
            <person name="Schoenbach C."/>
            <person name="Sekiguchi K."/>
            <person name="Semple C.A."/>
            <person name="Seno S."/>
            <person name="Sessa L."/>
            <person name="Sheng Y."/>
            <person name="Shibata Y."/>
            <person name="Shimada H."/>
            <person name="Shimada K."/>
            <person name="Silva D."/>
            <person name="Sinclair B."/>
            <person name="Sperling S."/>
            <person name="Stupka E."/>
            <person name="Sugiura K."/>
            <person name="Sultana R."/>
            <person name="Takenaka Y."/>
            <person name="Taki K."/>
            <person name="Tammoja K."/>
            <person name="Tan S.L."/>
            <person name="Tang S."/>
            <person name="Taylor M.S."/>
            <person name="Tegner J."/>
            <person name="Teichmann S.A."/>
            <person name="Ueda H.R."/>
            <person name="van Nimwegen E."/>
            <person name="Verardo R."/>
            <person name="Wei C.L."/>
            <person name="Yagi K."/>
            <person name="Yamanishi H."/>
            <person name="Zabarovsky E."/>
            <person name="Zhu S."/>
            <person name="Zimmer A."/>
            <person name="Hide W."/>
            <person name="Bult C."/>
            <person name="Grimmond S.M."/>
            <person name="Teasdale R.D."/>
            <person name="Liu E.T."/>
            <person name="Brusic V."/>
            <person name="Quackenbush J."/>
            <person name="Wahlestedt C."/>
            <person name="Mattick J.S."/>
            <person name="Hume D.A."/>
            <person name="Kai C."/>
            <person name="Sasaki D."/>
            <person name="Tomaru Y."/>
            <person name="Fukuda S."/>
            <person name="Kanamori-Katayama M."/>
            <person name="Suzuki M."/>
            <person name="Aoki J."/>
            <person name="Arakawa T."/>
            <person name="Iida J."/>
            <person name="Imamura K."/>
            <person name="Itoh M."/>
            <person name="Kato T."/>
            <person name="Kawaji H."/>
            <person name="Kawagashira N."/>
            <person name="Kawashima T."/>
            <person name="Kojima M."/>
            <person name="Kondo S."/>
            <person name="Konno H."/>
            <person name="Nakano K."/>
            <person name="Ninomiya N."/>
            <person name="Nishio T."/>
            <person name="Okada M."/>
            <person name="Plessy C."/>
            <person name="Shibata K."/>
            <person name="Shiraki T."/>
            <person name="Suzuki S."/>
            <person name="Tagami M."/>
            <person name="Waki K."/>
            <person name="Watahiki A."/>
            <person name="Okamura-Oho Y."/>
            <person name="Suzuki H."/>
            <person name="Kawai J."/>
            <person name="Hayashizaki Y."/>
        </authorList>
    </citation>
    <scope>NUCLEOTIDE SEQUENCE [LARGE SCALE MRNA]</scope>
    <source>
        <strain>C57BL/6J</strain>
        <tissue>Testis</tissue>
    </source>
</reference>
<reference key="2">
    <citation type="journal article" date="2009" name="PLoS Biol.">
        <title>Lineage-specific biology revealed by a finished genome assembly of the mouse.</title>
        <authorList>
            <person name="Church D.M."/>
            <person name="Goodstadt L."/>
            <person name="Hillier L.W."/>
            <person name="Zody M.C."/>
            <person name="Goldstein S."/>
            <person name="She X."/>
            <person name="Bult C.J."/>
            <person name="Agarwala R."/>
            <person name="Cherry J.L."/>
            <person name="DiCuccio M."/>
            <person name="Hlavina W."/>
            <person name="Kapustin Y."/>
            <person name="Meric P."/>
            <person name="Maglott D."/>
            <person name="Birtle Z."/>
            <person name="Marques A.C."/>
            <person name="Graves T."/>
            <person name="Zhou S."/>
            <person name="Teague B."/>
            <person name="Potamousis K."/>
            <person name="Churas C."/>
            <person name="Place M."/>
            <person name="Herschleb J."/>
            <person name="Runnheim R."/>
            <person name="Forrest D."/>
            <person name="Amos-Landgraf J."/>
            <person name="Schwartz D.C."/>
            <person name="Cheng Z."/>
            <person name="Lindblad-Toh K."/>
            <person name="Eichler E.E."/>
            <person name="Ponting C.P."/>
        </authorList>
    </citation>
    <scope>NUCLEOTIDE SEQUENCE [LARGE SCALE GENOMIC DNA]</scope>
    <source>
        <strain>C57BL/6J</strain>
    </source>
</reference>
<reference key="3">
    <citation type="journal article" date="2004" name="Genome Res.">
        <title>The status, quality, and expansion of the NIH full-length cDNA project: the Mammalian Gene Collection (MGC).</title>
        <authorList>
            <consortium name="The MGC Project Team"/>
        </authorList>
    </citation>
    <scope>NUCLEOTIDE SEQUENCE [LARGE SCALE MRNA]</scope>
</reference>
<reference key="4">
    <citation type="submission" date="2006-10" db="PDB data bank">
        <title>Solution structure of RSGI RUH-056, a UBA domain from mouse cDNA.</title>
        <authorList>
            <consortium name="RIKEN structural genomics initiative (RSGI)"/>
        </authorList>
    </citation>
    <scope>STRUCTURE BY NMR OF 556-609</scope>
</reference>